<dbReference type="EC" id="2.1.3.2" evidence="1"/>
<dbReference type="EMBL" id="CP000863">
    <property type="protein sequence ID" value="ACC56482.1"/>
    <property type="molecule type" value="Genomic_DNA"/>
</dbReference>
<dbReference type="RefSeq" id="WP_000546639.1">
    <property type="nucleotide sequence ID" value="NZ_CP031380.1"/>
</dbReference>
<dbReference type="SMR" id="B2HWY0"/>
<dbReference type="KEGG" id="abc:ACICU_01170"/>
<dbReference type="HOGENOM" id="CLU_043846_2_0_6"/>
<dbReference type="UniPathway" id="UPA00070">
    <property type="reaction ID" value="UER00116"/>
</dbReference>
<dbReference type="Proteomes" id="UP000008839">
    <property type="component" value="Chromosome"/>
</dbReference>
<dbReference type="GO" id="GO:0005829">
    <property type="term" value="C:cytosol"/>
    <property type="evidence" value="ECO:0007669"/>
    <property type="project" value="TreeGrafter"/>
</dbReference>
<dbReference type="GO" id="GO:0016597">
    <property type="term" value="F:amino acid binding"/>
    <property type="evidence" value="ECO:0007669"/>
    <property type="project" value="InterPro"/>
</dbReference>
<dbReference type="GO" id="GO:0004070">
    <property type="term" value="F:aspartate carbamoyltransferase activity"/>
    <property type="evidence" value="ECO:0007669"/>
    <property type="project" value="UniProtKB-UniRule"/>
</dbReference>
<dbReference type="GO" id="GO:0006207">
    <property type="term" value="P:'de novo' pyrimidine nucleobase biosynthetic process"/>
    <property type="evidence" value="ECO:0007669"/>
    <property type="project" value="InterPro"/>
</dbReference>
<dbReference type="GO" id="GO:0044205">
    <property type="term" value="P:'de novo' UMP biosynthetic process"/>
    <property type="evidence" value="ECO:0007669"/>
    <property type="project" value="UniProtKB-UniRule"/>
</dbReference>
<dbReference type="GO" id="GO:0006520">
    <property type="term" value="P:amino acid metabolic process"/>
    <property type="evidence" value="ECO:0007669"/>
    <property type="project" value="InterPro"/>
</dbReference>
<dbReference type="FunFam" id="3.40.50.1370:FF:000007">
    <property type="entry name" value="Aspartate carbamoyltransferase"/>
    <property type="match status" value="1"/>
</dbReference>
<dbReference type="Gene3D" id="3.40.50.1370">
    <property type="entry name" value="Aspartate/ornithine carbamoyltransferase"/>
    <property type="match status" value="2"/>
</dbReference>
<dbReference type="HAMAP" id="MF_00001">
    <property type="entry name" value="Asp_carb_tr"/>
    <property type="match status" value="1"/>
</dbReference>
<dbReference type="InterPro" id="IPR006132">
    <property type="entry name" value="Asp/Orn_carbamoyltranf_P-bd"/>
</dbReference>
<dbReference type="InterPro" id="IPR006130">
    <property type="entry name" value="Asp/Orn_carbamoylTrfase"/>
</dbReference>
<dbReference type="InterPro" id="IPR036901">
    <property type="entry name" value="Asp/Orn_carbamoylTrfase_sf"/>
</dbReference>
<dbReference type="InterPro" id="IPR002082">
    <property type="entry name" value="Asp_carbamoyltransf"/>
</dbReference>
<dbReference type="InterPro" id="IPR006131">
    <property type="entry name" value="Asp_carbamoyltransf_Asp/Orn-bd"/>
</dbReference>
<dbReference type="NCBIfam" id="TIGR00670">
    <property type="entry name" value="asp_carb_tr"/>
    <property type="match status" value="1"/>
</dbReference>
<dbReference type="NCBIfam" id="NF002032">
    <property type="entry name" value="PRK00856.1"/>
    <property type="match status" value="1"/>
</dbReference>
<dbReference type="PANTHER" id="PTHR45753:SF6">
    <property type="entry name" value="ASPARTATE CARBAMOYLTRANSFERASE"/>
    <property type="match status" value="1"/>
</dbReference>
<dbReference type="PANTHER" id="PTHR45753">
    <property type="entry name" value="ORNITHINE CARBAMOYLTRANSFERASE, MITOCHONDRIAL"/>
    <property type="match status" value="1"/>
</dbReference>
<dbReference type="Pfam" id="PF00185">
    <property type="entry name" value="OTCace"/>
    <property type="match status" value="1"/>
</dbReference>
<dbReference type="Pfam" id="PF02729">
    <property type="entry name" value="OTCace_N"/>
    <property type="match status" value="1"/>
</dbReference>
<dbReference type="PRINTS" id="PR00100">
    <property type="entry name" value="AOTCASE"/>
</dbReference>
<dbReference type="PRINTS" id="PR00101">
    <property type="entry name" value="ATCASE"/>
</dbReference>
<dbReference type="SUPFAM" id="SSF53671">
    <property type="entry name" value="Aspartate/ornithine carbamoyltransferase"/>
    <property type="match status" value="1"/>
</dbReference>
<dbReference type="PROSITE" id="PS00097">
    <property type="entry name" value="CARBAMOYLTRANSFERASE"/>
    <property type="match status" value="1"/>
</dbReference>
<proteinExistence type="inferred from homology"/>
<sequence length="338" mass="37178">MHIAALHQPSQVQLNQDGNLKHFLTIEGLSKENLTKILDTAQSFLDDNNNLINRPLLEGRTVMNLFFENSTRTRTTFEAAAKRLSANVLNIDIARSSTSKGETLRDTLWNLEAMAADIFVVRHSSSGAAHFIAKDVCPKVAIINAGDGRHAHPTQAMLDMLTIRRETKKPFEDLSVAIIGDIKHSRVARSDVAALQTLGCKDIRVIAPNTLLPVGFSEYGDHVRLFNNMDEGITGCDVIIALRIQNERIDSPALSSQSEFYRMYGLNKERLSLAKPDCIVMHPGPMNRGVEIDSSIADGEQSVILKQVTNGIAVRMAVLALSMQGQLQEQGLIEAIAL</sequence>
<keyword id="KW-0665">Pyrimidine biosynthesis</keyword>
<keyword id="KW-0808">Transferase</keyword>
<reference key="1">
    <citation type="journal article" date="2008" name="Antimicrob. Agents Chemother.">
        <title>Whole-genome pyrosequencing of an epidemic multidrug-resistant Acinetobacter baumannii strain belonging to the European clone II group.</title>
        <authorList>
            <person name="Iacono M."/>
            <person name="Villa L."/>
            <person name="Fortini D."/>
            <person name="Bordoni R."/>
            <person name="Imperi F."/>
            <person name="Bonnal R.J."/>
            <person name="Sicheritz-Ponten T."/>
            <person name="De Bellis G."/>
            <person name="Visca P."/>
            <person name="Cassone A."/>
            <person name="Carattoli A."/>
        </authorList>
    </citation>
    <scope>NUCLEOTIDE SEQUENCE [LARGE SCALE GENOMIC DNA]</scope>
    <source>
        <strain>ACICU</strain>
    </source>
</reference>
<protein>
    <recommendedName>
        <fullName evidence="1">Aspartate carbamoyltransferase catalytic subunit</fullName>
        <ecNumber evidence="1">2.1.3.2</ecNumber>
    </recommendedName>
    <alternativeName>
        <fullName evidence="1">Aspartate transcarbamylase</fullName>
        <shortName evidence="1">ATCase</shortName>
    </alternativeName>
</protein>
<evidence type="ECO:0000255" key="1">
    <source>
        <dbReference type="HAMAP-Rule" id="MF_00001"/>
    </source>
</evidence>
<organism>
    <name type="scientific">Acinetobacter baumannii (strain ACICU)</name>
    <dbReference type="NCBI Taxonomy" id="405416"/>
    <lineage>
        <taxon>Bacteria</taxon>
        <taxon>Pseudomonadati</taxon>
        <taxon>Pseudomonadota</taxon>
        <taxon>Gammaproteobacteria</taxon>
        <taxon>Moraxellales</taxon>
        <taxon>Moraxellaceae</taxon>
        <taxon>Acinetobacter</taxon>
        <taxon>Acinetobacter calcoaceticus/baumannii complex</taxon>
    </lineage>
</organism>
<gene>
    <name evidence="1" type="primary">pyrB</name>
    <name type="ordered locus">ACICU_01170</name>
</gene>
<name>PYRB_ACIBC</name>
<accession>B2HWY0</accession>
<feature type="chain" id="PRO_1000088728" description="Aspartate carbamoyltransferase catalytic subunit">
    <location>
        <begin position="1"/>
        <end position="338"/>
    </location>
</feature>
<feature type="binding site" evidence="1">
    <location>
        <position position="72"/>
    </location>
    <ligand>
        <name>carbamoyl phosphate</name>
        <dbReference type="ChEBI" id="CHEBI:58228"/>
    </ligand>
</feature>
<feature type="binding site" evidence="1">
    <location>
        <position position="73"/>
    </location>
    <ligand>
        <name>carbamoyl phosphate</name>
        <dbReference type="ChEBI" id="CHEBI:58228"/>
    </ligand>
</feature>
<feature type="binding site" evidence="1">
    <location>
        <position position="100"/>
    </location>
    <ligand>
        <name>L-aspartate</name>
        <dbReference type="ChEBI" id="CHEBI:29991"/>
    </ligand>
</feature>
<feature type="binding site" evidence="1">
    <location>
        <position position="122"/>
    </location>
    <ligand>
        <name>carbamoyl phosphate</name>
        <dbReference type="ChEBI" id="CHEBI:58228"/>
    </ligand>
</feature>
<feature type="binding site" evidence="1">
    <location>
        <position position="152"/>
    </location>
    <ligand>
        <name>carbamoyl phosphate</name>
        <dbReference type="ChEBI" id="CHEBI:58228"/>
    </ligand>
</feature>
<feature type="binding site" evidence="1">
    <location>
        <position position="155"/>
    </location>
    <ligand>
        <name>carbamoyl phosphate</name>
        <dbReference type="ChEBI" id="CHEBI:58228"/>
    </ligand>
</feature>
<feature type="binding site" evidence="1">
    <location>
        <position position="186"/>
    </location>
    <ligand>
        <name>L-aspartate</name>
        <dbReference type="ChEBI" id="CHEBI:29991"/>
    </ligand>
</feature>
<feature type="binding site" evidence="1">
    <location>
        <position position="243"/>
    </location>
    <ligand>
        <name>L-aspartate</name>
        <dbReference type="ChEBI" id="CHEBI:29991"/>
    </ligand>
</feature>
<feature type="binding site" evidence="1">
    <location>
        <position position="284"/>
    </location>
    <ligand>
        <name>carbamoyl phosphate</name>
        <dbReference type="ChEBI" id="CHEBI:58228"/>
    </ligand>
</feature>
<feature type="binding site" evidence="1">
    <location>
        <position position="285"/>
    </location>
    <ligand>
        <name>carbamoyl phosphate</name>
        <dbReference type="ChEBI" id="CHEBI:58228"/>
    </ligand>
</feature>
<comment type="function">
    <text evidence="1">Catalyzes the condensation of carbamoyl phosphate and aspartate to form carbamoyl aspartate and inorganic phosphate, the committed step in the de novo pyrimidine nucleotide biosynthesis pathway.</text>
</comment>
<comment type="catalytic activity">
    <reaction evidence="1">
        <text>carbamoyl phosphate + L-aspartate = N-carbamoyl-L-aspartate + phosphate + H(+)</text>
        <dbReference type="Rhea" id="RHEA:20013"/>
        <dbReference type="ChEBI" id="CHEBI:15378"/>
        <dbReference type="ChEBI" id="CHEBI:29991"/>
        <dbReference type="ChEBI" id="CHEBI:32814"/>
        <dbReference type="ChEBI" id="CHEBI:43474"/>
        <dbReference type="ChEBI" id="CHEBI:58228"/>
        <dbReference type="EC" id="2.1.3.2"/>
    </reaction>
</comment>
<comment type="pathway">
    <text evidence="1">Pyrimidine metabolism; UMP biosynthesis via de novo pathway; (S)-dihydroorotate from bicarbonate: step 2/3.</text>
</comment>
<comment type="subunit">
    <text evidence="1">Heterododecamer (2C3:3R2) of six catalytic PyrB chains organized as two trimers (C3), and six regulatory PyrI chains organized as three dimers (R2).</text>
</comment>
<comment type="similarity">
    <text evidence="1">Belongs to the aspartate/ornithine carbamoyltransferase superfamily. ATCase family.</text>
</comment>